<organism>
    <name type="scientific">Sinorhizobium fredii (strain NBRC 101917 / NGR234)</name>
    <dbReference type="NCBI Taxonomy" id="394"/>
    <lineage>
        <taxon>Bacteria</taxon>
        <taxon>Pseudomonadati</taxon>
        <taxon>Pseudomonadota</taxon>
        <taxon>Alphaproteobacteria</taxon>
        <taxon>Hyphomicrobiales</taxon>
        <taxon>Rhizobiaceae</taxon>
        <taxon>Sinorhizobium/Ensifer group</taxon>
        <taxon>Sinorhizobium</taxon>
    </lineage>
</organism>
<protein>
    <recommendedName>
        <fullName>Uncharacterized protein y4xJ</fullName>
    </recommendedName>
</protein>
<feature type="chain" id="PRO_0000209447" description="Uncharacterized protein y4xJ">
    <location>
        <begin position="1"/>
        <end position="423"/>
    </location>
</feature>
<feature type="domain" description="BON" evidence="1">
    <location>
        <begin position="75"/>
        <end position="145"/>
    </location>
</feature>
<sequence>MPRAAPNSINATLNLSSSLGKTVHLPAPAATIFVADPTIADYQAPSNRTIFVFGKKFGRTSLFALDENGEALAELHVVVTQPIADLRAMLRDQVGDYPIHVSYTPRGAILSGTAPNAEVVDIAKRVTEQFLGDGAPIVNNIKVAGSLQVNLSVRVAEVSRSGLKALGINLSAFGQFGNFKVGVLNRGAGLGSATGSGGTAEIGFDNDAVSVGAVLDALAKEHIASVLAEPNLTAMSGETASFLAGGEFPIPVLQENGQTSVEFRRFGVSLEFVPTVLDNNLINIHVKPEVSELSLQGAVQVNGIAVPAVSTRRADTVVELASGQSFVIGGLIRRNVNNDISAFPWLGRIPILGALFRSSSFQKEESELVILVTPYIVRPGSNPNQMSAPTDRMAPALGTPPRARAAISTDAPSVKGDLGFIIE</sequence>
<geneLocation type="plasmid">
    <name>sym pNGR234a</name>
</geneLocation>
<dbReference type="EMBL" id="U00090">
    <property type="protein sequence ID" value="AAB91933.1"/>
    <property type="molecule type" value="Genomic_DNA"/>
</dbReference>
<dbReference type="RefSeq" id="NP_444146.1">
    <property type="nucleotide sequence ID" value="NC_000914.2"/>
</dbReference>
<dbReference type="SMR" id="P55702"/>
<dbReference type="KEGG" id="rhi:NGR_a00790"/>
<dbReference type="PATRIC" id="fig|394.7.peg.69"/>
<dbReference type="eggNOG" id="COG4964">
    <property type="taxonomic scope" value="Bacteria"/>
</dbReference>
<dbReference type="HOGENOM" id="CLU_017952_2_0_5"/>
<dbReference type="OrthoDB" id="9775455at2"/>
<dbReference type="Proteomes" id="UP000001054">
    <property type="component" value="Plasmid pNGR234a"/>
</dbReference>
<dbReference type="GO" id="GO:0015627">
    <property type="term" value="C:type II protein secretion system complex"/>
    <property type="evidence" value="ECO:0007669"/>
    <property type="project" value="TreeGrafter"/>
</dbReference>
<dbReference type="GO" id="GO:0009306">
    <property type="term" value="P:protein secretion"/>
    <property type="evidence" value="ECO:0007669"/>
    <property type="project" value="InterPro"/>
</dbReference>
<dbReference type="InterPro" id="IPR050810">
    <property type="entry name" value="Bact_Secretion_Sys_Channel"/>
</dbReference>
<dbReference type="InterPro" id="IPR007055">
    <property type="entry name" value="BON_dom"/>
</dbReference>
<dbReference type="InterPro" id="IPR001775">
    <property type="entry name" value="GspD/PilQ"/>
</dbReference>
<dbReference type="InterPro" id="IPR032789">
    <property type="entry name" value="T2SS-T3SS_pil_N"/>
</dbReference>
<dbReference type="InterPro" id="IPR004846">
    <property type="entry name" value="T2SS/T3SS_dom"/>
</dbReference>
<dbReference type="InterPro" id="IPR014004">
    <property type="entry name" value="Transpt-assoc_nodulatn_dom_bac"/>
</dbReference>
<dbReference type="PANTHER" id="PTHR30332">
    <property type="entry name" value="PROBABLE GENERAL SECRETION PATHWAY PROTEIN D"/>
    <property type="match status" value="1"/>
</dbReference>
<dbReference type="PANTHER" id="PTHR30332:SF17">
    <property type="entry name" value="TYPE IV PILIATION SYSTEM PROTEIN DR_0774-RELATED"/>
    <property type="match status" value="1"/>
</dbReference>
<dbReference type="Pfam" id="PF00263">
    <property type="entry name" value="Secretin"/>
    <property type="match status" value="1"/>
</dbReference>
<dbReference type="Pfam" id="PF13629">
    <property type="entry name" value="T2SS-T3SS_pil_N"/>
    <property type="match status" value="1"/>
</dbReference>
<dbReference type="PRINTS" id="PR00811">
    <property type="entry name" value="BCTERIALGSPD"/>
</dbReference>
<dbReference type="SMART" id="SM00749">
    <property type="entry name" value="BON"/>
    <property type="match status" value="1"/>
</dbReference>
<dbReference type="PROSITE" id="PS50914">
    <property type="entry name" value="BON"/>
    <property type="match status" value="1"/>
</dbReference>
<reference key="1">
    <citation type="journal article" date="1997" name="Nature">
        <title>Molecular basis of symbiosis between Rhizobium and legumes.</title>
        <authorList>
            <person name="Freiberg C.A."/>
            <person name="Fellay R."/>
            <person name="Bairoch A."/>
            <person name="Broughton W.J."/>
            <person name="Rosenthal A."/>
            <person name="Perret X."/>
        </authorList>
    </citation>
    <scope>NUCLEOTIDE SEQUENCE [LARGE SCALE GENOMIC DNA]</scope>
    <source>
        <strain>NBRC 101917 / NGR234</strain>
    </source>
</reference>
<reference key="2">
    <citation type="journal article" date="2009" name="Appl. Environ. Microbiol.">
        <title>Rhizobium sp. strain NGR234 possesses a remarkable number of secretion systems.</title>
        <authorList>
            <person name="Schmeisser C."/>
            <person name="Liesegang H."/>
            <person name="Krysciak D."/>
            <person name="Bakkou N."/>
            <person name="Le Quere A."/>
            <person name="Wollherr A."/>
            <person name="Heinemeyer I."/>
            <person name="Morgenstern B."/>
            <person name="Pommerening-Roeser A."/>
            <person name="Flores M."/>
            <person name="Palacios R."/>
            <person name="Brenner S."/>
            <person name="Gottschalk G."/>
            <person name="Schmitz R.A."/>
            <person name="Broughton W.J."/>
            <person name="Perret X."/>
            <person name="Strittmatter A.W."/>
            <person name="Streit W.R."/>
        </authorList>
    </citation>
    <scope>NUCLEOTIDE SEQUENCE [LARGE SCALE GENOMIC DNA]</scope>
    <source>
        <strain>NBRC 101917 / NGR234</strain>
    </source>
</reference>
<evidence type="ECO:0000255" key="1">
    <source>
        <dbReference type="PROSITE-ProRule" id="PRU00229"/>
    </source>
</evidence>
<evidence type="ECO:0000305" key="2"/>
<proteinExistence type="inferred from homology"/>
<name>Y4XJ_SINFN</name>
<gene>
    <name type="ordered locus">NGR_a00790</name>
    <name type="ORF">y4xJ</name>
</gene>
<comment type="function">
    <text evidence="2">Involved in the secretion of an unknown compound.</text>
</comment>
<comment type="similarity">
    <text evidence="2">Belongs to the bacterial secretin family.</text>
</comment>
<comment type="caution">
    <text evidence="2">The proteins from this family have generally a signal sequence and are found in the outer membrane. This protein lacks a recognizable signal sequence.</text>
</comment>
<accession>P55702</accession>
<keyword id="KW-0614">Plasmid</keyword>
<keyword id="KW-1185">Reference proteome</keyword>
<keyword id="KW-0813">Transport</keyword>